<evidence type="ECO:0000250" key="1">
    <source>
        <dbReference type="UniProtKB" id="O55227"/>
    </source>
</evidence>
<evidence type="ECO:0000255" key="2"/>
<evidence type="ECO:0000269" key="3">
    <source>
    </source>
</evidence>
<evidence type="ECO:0000269" key="4">
    <source>
    </source>
</evidence>
<evidence type="ECO:0000269" key="5">
    <source>
    </source>
</evidence>
<evidence type="ECO:0000305" key="6"/>
<evidence type="ECO:0007744" key="7">
    <source>
    </source>
</evidence>
<evidence type="ECO:0007744" key="8">
    <source>
    </source>
</evidence>
<name>UNC50_HUMAN</name>
<proteinExistence type="evidence at protein level"/>
<accession>Q53HI1</accession>
<accession>D3DVH4</accession>
<accession>Q53S98</accession>
<accession>Q53TD6</accession>
<accession>Q5U5U2</accession>
<accession>Q6X7B9</accession>
<accession>Q9UQF4</accession>
<accession>Q9Y4S6</accession>
<sequence length="259" mass="30373">MLPSTSVNSLVQGNGVLNSRDAARHTAGAKRYKYLRRLFRFRQMDFEFAAWQMLYLFTSPQRVYRNFHYRKQTKDQWARDDPAFLVLLSIWLCVSTIGFGFVLDMGFFETIKLLLWVVLIDCVGVGLLIATLMWFISNKYLVKRQSRDYDVEWGYAFDVHLNAFYPLLVILHFIQLFFINHVILTDTFIGYLVGNTLWLVAVGYYIYVTFLGYSALPFLKNTVILLYPFAPLILLYGLSLALGWNFTHTLCSFYKYRVK</sequence>
<protein>
    <recommendedName>
        <fullName>Protein unc-50 homolog</fullName>
    </recommendedName>
    <alternativeName>
        <fullName>Periodontal ligament-specific protein 22</fullName>
        <shortName>PDLs22</shortName>
    </alternativeName>
    <alternativeName>
        <fullName>Protein GMH1 homolog</fullName>
        <shortName>hGMH1</shortName>
    </alternativeName>
    <alternativeName>
        <fullName>Uncoordinated-like protein</fullName>
    </alternativeName>
</protein>
<keyword id="KW-0007">Acetylation</keyword>
<keyword id="KW-0333">Golgi apparatus</keyword>
<keyword id="KW-0472">Membrane</keyword>
<keyword id="KW-0539">Nucleus</keyword>
<keyword id="KW-0597">Phosphoprotein</keyword>
<keyword id="KW-1267">Proteomics identification</keyword>
<keyword id="KW-1185">Reference proteome</keyword>
<keyword id="KW-0694">RNA-binding</keyword>
<keyword id="KW-0812">Transmembrane</keyword>
<keyword id="KW-1133">Transmembrane helix</keyword>
<organism>
    <name type="scientific">Homo sapiens</name>
    <name type="common">Human</name>
    <dbReference type="NCBI Taxonomy" id="9606"/>
    <lineage>
        <taxon>Eukaryota</taxon>
        <taxon>Metazoa</taxon>
        <taxon>Chordata</taxon>
        <taxon>Craniata</taxon>
        <taxon>Vertebrata</taxon>
        <taxon>Euteleostomi</taxon>
        <taxon>Mammalia</taxon>
        <taxon>Eutheria</taxon>
        <taxon>Euarchontoglires</taxon>
        <taxon>Primates</taxon>
        <taxon>Haplorrhini</taxon>
        <taxon>Catarrhini</taxon>
        <taxon>Hominidae</taxon>
        <taxon>Homo</taxon>
    </lineage>
</organism>
<gene>
    <name type="primary">UNC50</name>
    <name type="synonym">UNCL</name>
    <name type="ORF">HSD-23</name>
    <name type="ORF">HSD23</name>
</gene>
<reference key="1">
    <citation type="submission" date="2000-12" db="EMBL/GenBank/DDBJ databases">
        <authorList>
            <person name="Yu L."/>
        </authorList>
    </citation>
    <scope>NUCLEOTIDE SEQUENCE [MRNA]</scope>
</reference>
<reference key="2">
    <citation type="journal article" date="2000" name="Genome Res.">
        <title>Cloning and functional analysis of cDNAs with open reading frames for 300 previously undefined genes expressed in CD34+ hematopoietic stem/progenitor cells.</title>
        <authorList>
            <person name="Zhang Q.-H."/>
            <person name="Ye M."/>
            <person name="Wu X.-Y."/>
            <person name="Ren S.-X."/>
            <person name="Zhao M."/>
            <person name="Zhao C.-J."/>
            <person name="Fu G."/>
            <person name="Shen Y."/>
            <person name="Fan H.-Y."/>
            <person name="Lu G."/>
            <person name="Zhong M."/>
            <person name="Xu X.-R."/>
            <person name="Han Z.-G."/>
            <person name="Zhang J.-W."/>
            <person name="Tao J."/>
            <person name="Huang Q.-H."/>
            <person name="Zhou J."/>
            <person name="Hu G.-X."/>
            <person name="Gu J."/>
            <person name="Chen S.-J."/>
            <person name="Chen Z."/>
        </authorList>
    </citation>
    <scope>NUCLEOTIDE SEQUENCE [LARGE SCALE MRNA]</scope>
    <source>
        <tissue>Umbilical cord blood</tissue>
    </source>
</reference>
<reference key="3">
    <citation type="journal article" date="2001" name="Genome Res.">
        <title>Towards a catalog of human genes and proteins: sequencing and analysis of 500 novel complete protein coding human cDNAs.</title>
        <authorList>
            <person name="Wiemann S."/>
            <person name="Weil B."/>
            <person name="Wellenreuther R."/>
            <person name="Gassenhuber J."/>
            <person name="Glassl S."/>
            <person name="Ansorge W."/>
            <person name="Boecher M."/>
            <person name="Bloecker H."/>
            <person name="Bauersachs S."/>
            <person name="Blum H."/>
            <person name="Lauber J."/>
            <person name="Duesterhoeft A."/>
            <person name="Beyer A."/>
            <person name="Koehrer K."/>
            <person name="Strack N."/>
            <person name="Mewes H.-W."/>
            <person name="Ottenwaelder B."/>
            <person name="Obermaier B."/>
            <person name="Tampe J."/>
            <person name="Heubner D."/>
            <person name="Wambutt R."/>
            <person name="Korn B."/>
            <person name="Klein M."/>
            <person name="Poustka A."/>
        </authorList>
    </citation>
    <scope>NUCLEOTIDE SEQUENCE [LARGE SCALE MRNA]</scope>
    <source>
        <tissue>Brain</tissue>
    </source>
</reference>
<reference key="4">
    <citation type="submission" date="2003-03" db="EMBL/GenBank/DDBJ databases">
        <title>A new spermatogenesis-related gene.</title>
        <authorList>
            <person name="Wu N."/>
            <person name="Miao S.Y."/>
            <person name="Zhang X.D."/>
            <person name="Qiao Y."/>
            <person name="Liang G."/>
            <person name="Wang L.F."/>
        </authorList>
    </citation>
    <scope>NUCLEOTIDE SEQUENCE [LARGE SCALE MRNA]</scope>
    <source>
        <tissue>Testis</tissue>
    </source>
</reference>
<reference key="5">
    <citation type="submission" date="2004-06" db="EMBL/GenBank/DDBJ databases">
        <title>Cloning of human full open reading frames in Gateway(TM) system entry vector (pDONR201).</title>
        <authorList>
            <person name="Ebert L."/>
            <person name="Schick M."/>
            <person name="Neubert P."/>
            <person name="Schatten R."/>
            <person name="Henze S."/>
            <person name="Korn B."/>
        </authorList>
    </citation>
    <scope>NUCLEOTIDE SEQUENCE [LARGE SCALE MRNA]</scope>
</reference>
<reference key="6">
    <citation type="submission" date="2005-04" db="EMBL/GenBank/DDBJ databases">
        <authorList>
            <person name="Suzuki Y."/>
            <person name="Sugano S."/>
            <person name="Totoki Y."/>
            <person name="Toyoda A."/>
            <person name="Takeda T."/>
            <person name="Sakaki Y."/>
            <person name="Tanaka A."/>
            <person name="Yokoyama S."/>
        </authorList>
    </citation>
    <scope>NUCLEOTIDE SEQUENCE [LARGE SCALE MRNA]</scope>
    <source>
        <tissue>Coronary artery</tissue>
    </source>
</reference>
<reference key="7">
    <citation type="submission" date="2005-07" db="EMBL/GenBank/DDBJ databases">
        <authorList>
            <person name="Mural R.J."/>
            <person name="Istrail S."/>
            <person name="Sutton G.G."/>
            <person name="Florea L."/>
            <person name="Halpern A.L."/>
            <person name="Mobarry C.M."/>
            <person name="Lippert R."/>
            <person name="Walenz B."/>
            <person name="Shatkay H."/>
            <person name="Dew I."/>
            <person name="Miller J.R."/>
            <person name="Flanigan M.J."/>
            <person name="Edwards N.J."/>
            <person name="Bolanos R."/>
            <person name="Fasulo D."/>
            <person name="Halldorsson B.V."/>
            <person name="Hannenhalli S."/>
            <person name="Turner R."/>
            <person name="Yooseph S."/>
            <person name="Lu F."/>
            <person name="Nusskern D.R."/>
            <person name="Shue B.C."/>
            <person name="Zheng X.H."/>
            <person name="Zhong F."/>
            <person name="Delcher A.L."/>
            <person name="Huson D.H."/>
            <person name="Kravitz S.A."/>
            <person name="Mouchard L."/>
            <person name="Reinert K."/>
            <person name="Remington K.A."/>
            <person name="Clark A.G."/>
            <person name="Waterman M.S."/>
            <person name="Eichler E.E."/>
            <person name="Adams M.D."/>
            <person name="Hunkapiller M.W."/>
            <person name="Myers E.W."/>
            <person name="Venter J.C."/>
        </authorList>
    </citation>
    <scope>NUCLEOTIDE SEQUENCE [LARGE SCALE GENOMIC DNA]</scope>
</reference>
<reference key="8">
    <citation type="submission" date="2005-09" db="EMBL/GenBank/DDBJ databases">
        <authorList>
            <person name="Mural R.J."/>
            <person name="Istrail S."/>
            <person name="Sutton G.G."/>
            <person name="Florea L."/>
            <person name="Halpern A.L."/>
            <person name="Mobarry C.M."/>
            <person name="Lippert R."/>
            <person name="Walenz B."/>
            <person name="Shatkay H."/>
            <person name="Dew I."/>
            <person name="Miller J.R."/>
            <person name="Flanigan M.J."/>
            <person name="Edwards N.J."/>
            <person name="Bolanos R."/>
            <person name="Fasulo D."/>
            <person name="Halldorsson B.V."/>
            <person name="Hannenhalli S."/>
            <person name="Turner R."/>
            <person name="Yooseph S."/>
            <person name="Lu F."/>
            <person name="Nusskern D.R."/>
            <person name="Shue B.C."/>
            <person name="Zheng X.H."/>
            <person name="Zhong F."/>
            <person name="Delcher A.L."/>
            <person name="Huson D.H."/>
            <person name="Kravitz S.A."/>
            <person name="Mouchard L."/>
            <person name="Reinert K."/>
            <person name="Remington K.A."/>
            <person name="Clark A.G."/>
            <person name="Waterman M.S."/>
            <person name="Eichler E.E."/>
            <person name="Adams M.D."/>
            <person name="Hunkapiller M.W."/>
            <person name="Myers E.W."/>
            <person name="Venter J.C."/>
        </authorList>
    </citation>
    <scope>NUCLEOTIDE SEQUENCE [LARGE SCALE GENOMIC DNA]</scope>
</reference>
<reference key="9">
    <citation type="journal article" date="2004" name="Genome Res.">
        <title>The status, quality, and expansion of the NIH full-length cDNA project: the Mammalian Gene Collection (MGC).</title>
        <authorList>
            <consortium name="The MGC Project Team"/>
        </authorList>
    </citation>
    <scope>NUCLEOTIDE SEQUENCE [LARGE SCALE MRNA]</scope>
    <source>
        <tissue>Brain</tissue>
        <tissue>Lung</tissue>
        <tissue>Placenta</tissue>
        <tissue>Testis</tissue>
    </source>
</reference>
<reference key="10">
    <citation type="journal article" date="2000" name="Brain Res.">
        <title>UNCL, the mammalian homologue of UNC-50, is an inner nuclear membrane RNA-binding protein.</title>
        <authorList>
            <person name="Fitzgerald J."/>
            <person name="Kennedy D."/>
            <person name="Viseshakul N."/>
            <person name="Cohen B.N."/>
            <person name="Mattick J."/>
            <person name="Bateman J.F."/>
            <person name="Forsayeth J.R."/>
        </authorList>
    </citation>
    <scope>IDENTIFICATION</scope>
</reference>
<reference key="11">
    <citation type="journal article" date="2001" name="Biochem. Biophys. Res. Commun.">
        <title>Isolation and characterization of cultured human periodontal ligament fibroblast-specific cDNAs.</title>
        <authorList>
            <person name="Park J.-C."/>
            <person name="Kim Y.-B."/>
            <person name="Kim H.-J."/>
            <person name="Jang H.-S."/>
            <person name="Kim H.-S."/>
            <person name="Kim B.-O."/>
            <person name="Han K.-Y."/>
        </authorList>
    </citation>
    <scope>IDENTIFICATION</scope>
</reference>
<reference key="12">
    <citation type="journal article" date="2003" name="Mol. Biol. Cell">
        <title>A novel Golgi membrane protein is a partner of the ARF exchange factors Gea1p and Gea2p.</title>
        <authorList>
            <person name="Chantalat S."/>
            <person name="Courbeyrette R."/>
            <person name="Senic-Matuglia F."/>
            <person name="Jackson C.L."/>
            <person name="Goud B."/>
            <person name="Peyroche A."/>
        </authorList>
    </citation>
    <scope>SUBCELLULAR LOCATION</scope>
</reference>
<reference key="13">
    <citation type="journal article" date="2007" name="Cell Tissue Res.">
        <title>Expression of UNCL during development of periodontal tissue and response of periodontal ligament fibroblasts to mechanical stress in vivo and in vitro.</title>
        <authorList>
            <person name="Kim H.-J."/>
            <person name="Choi Y.S."/>
            <person name="Jeong M.-J."/>
            <person name="Kim B.-O."/>
            <person name="Lim S.-H."/>
            <person name="Kim D.K."/>
            <person name="Kim C.K."/>
            <person name="Park J.-C."/>
        </authorList>
    </citation>
    <scope>TISSUE SPECIFICITY</scope>
</reference>
<reference key="14">
    <citation type="journal article" date="2012" name="Proc. Natl. Acad. Sci. U.S.A.">
        <title>N-terminal acetylome analyses and functional insights of the N-terminal acetyltransferase NatB.</title>
        <authorList>
            <person name="Van Damme P."/>
            <person name="Lasa M."/>
            <person name="Polevoda B."/>
            <person name="Gazquez C."/>
            <person name="Elosegui-Artola A."/>
            <person name="Kim D.S."/>
            <person name="De Juan-Pardo E."/>
            <person name="Demeyer K."/>
            <person name="Hole K."/>
            <person name="Larrea E."/>
            <person name="Timmerman E."/>
            <person name="Prieto J."/>
            <person name="Arnesen T."/>
            <person name="Sherman F."/>
            <person name="Gevaert K."/>
            <person name="Aldabe R."/>
        </authorList>
    </citation>
    <scope>ACETYLATION [LARGE SCALE ANALYSIS] AT MET-1</scope>
    <scope>IDENTIFICATION BY MASS SPECTROMETRY [LARGE SCALE ANALYSIS]</scope>
</reference>
<reference key="15">
    <citation type="journal article" date="2013" name="J. Proteome Res.">
        <title>Toward a comprehensive characterization of a human cancer cell phosphoproteome.</title>
        <authorList>
            <person name="Zhou H."/>
            <person name="Di Palma S."/>
            <person name="Preisinger C."/>
            <person name="Peng M."/>
            <person name="Polat A.N."/>
            <person name="Heck A.J."/>
            <person name="Mohammed S."/>
        </authorList>
    </citation>
    <scope>PHOSPHORYLATION [LARGE SCALE ANALYSIS] AT SER-6</scope>
    <scope>IDENTIFICATION BY MASS SPECTROMETRY [LARGE SCALE ANALYSIS]</scope>
    <source>
        <tissue>Cervix carcinoma</tissue>
        <tissue>Erythroleukemia</tissue>
    </source>
</reference>
<reference key="16">
    <citation type="journal article" date="2015" name="Cell Rep.">
        <title>An organellar nalpha-acetyltransferase, naa60, acetylates cytosolic N termini of transmembrane proteins and maintains Golgi integrity.</title>
        <authorList>
            <person name="Aksnes H."/>
            <person name="Van Damme P."/>
            <person name="Goris M."/>
            <person name="Starheim K.K."/>
            <person name="Marie M."/>
            <person name="Stoeve S.I."/>
            <person name="Hoel C."/>
            <person name="Kalvik T.V."/>
            <person name="Hole K."/>
            <person name="Glomnes N."/>
            <person name="Furnes C."/>
            <person name="Ljostveit S."/>
            <person name="Ziegler M."/>
            <person name="Niere M."/>
            <person name="Gevaert K."/>
            <person name="Arnesen T."/>
        </authorList>
    </citation>
    <scope>ACETYLATION AT MET-1</scope>
</reference>
<feature type="chain" id="PRO_0000308961" description="Protein unc-50 homolog">
    <location>
        <begin position="1"/>
        <end position="259"/>
    </location>
</feature>
<feature type="topological domain" description="Cytoplasmic" evidence="2">
    <location>
        <begin position="1"/>
        <end position="82"/>
    </location>
</feature>
<feature type="transmembrane region" description="Helical" evidence="2">
    <location>
        <begin position="83"/>
        <end position="103"/>
    </location>
</feature>
<feature type="topological domain" description="Lumenal" evidence="2">
    <location>
        <begin position="104"/>
        <end position="115"/>
    </location>
</feature>
<feature type="transmembrane region" description="Helical" evidence="2">
    <location>
        <begin position="116"/>
        <end position="136"/>
    </location>
</feature>
<feature type="topological domain" description="Cytoplasmic" evidence="2">
    <location>
        <begin position="137"/>
        <end position="163"/>
    </location>
</feature>
<feature type="transmembrane region" description="Helical" evidence="2">
    <location>
        <begin position="164"/>
        <end position="184"/>
    </location>
</feature>
<feature type="topological domain" description="Lumenal" evidence="2">
    <location>
        <begin position="185"/>
        <end position="187"/>
    </location>
</feature>
<feature type="transmembrane region" description="Helical" evidence="2">
    <location>
        <begin position="188"/>
        <end position="208"/>
    </location>
</feature>
<feature type="topological domain" description="Cytoplasmic" evidence="2">
    <location>
        <begin position="209"/>
        <end position="222"/>
    </location>
</feature>
<feature type="transmembrane region" description="Helical" evidence="2">
    <location>
        <begin position="223"/>
        <end position="243"/>
    </location>
</feature>
<feature type="topological domain" description="Lumenal" evidence="2">
    <location>
        <begin position="244"/>
        <end position="259"/>
    </location>
</feature>
<feature type="modified residue" description="N-acetylmethionine" evidence="5 7">
    <location>
        <position position="1"/>
    </location>
</feature>
<feature type="modified residue" description="Phosphoserine" evidence="8">
    <location>
        <position position="6"/>
    </location>
</feature>
<feature type="sequence conflict" description="In Ref. 4; AAP20057." evidence="6" ref="4">
    <original>Y</original>
    <variation>C</variation>
    <location>
        <position position="34"/>
    </location>
</feature>
<feature type="sequence conflict" description="In Ref. 6; BAD96319." evidence="6" ref="6">
    <original>N</original>
    <variation>S</variation>
    <location>
        <position position="66"/>
    </location>
</feature>
<feature type="sequence conflict" description="In Ref. 9; AAH39078." evidence="6" ref="9">
    <original>L</original>
    <variation>P</variation>
    <location>
        <position position="115"/>
    </location>
</feature>
<feature type="sequence conflict" description="In Ref. 6; BAD96319." evidence="6" ref="6">
    <original>L</original>
    <variation>F</variation>
    <location>
        <position position="119"/>
    </location>
</feature>
<feature type="sequence conflict" description="In Ref. 1; AAK08987, 3; CAB45714 and 5; CAG38495." evidence="6" ref="1 3 5">
    <original>F</original>
    <variation>L</variation>
    <location>
        <position position="173"/>
    </location>
</feature>
<comment type="function">
    <text evidence="1">Involved in the cell surface expression of neuronal nicotinic receptors (By similarity). Binds RNA (By similarity).</text>
</comment>
<comment type="interaction">
    <interactant intactId="EBI-7601760">
        <id>Q53HI1</id>
    </interactant>
    <interactant intactId="EBI-13059134">
        <id>Q13520</id>
        <label>AQP6</label>
    </interactant>
    <organismsDiffer>false</organismsDiffer>
    <experiments>3</experiments>
</comment>
<comment type="interaction">
    <interactant intactId="EBI-7601760">
        <id>Q53HI1</id>
    </interactant>
    <interactant intactId="EBI-2873246">
        <id>Q8IUN9</id>
        <label>CLEC10A</label>
    </interactant>
    <organismsDiffer>false</organismsDiffer>
    <experiments>3</experiments>
</comment>
<comment type="interaction">
    <interactant intactId="EBI-7601760">
        <id>Q53HI1</id>
    </interactant>
    <interactant intactId="EBI-17274839">
        <id>P58418</id>
        <label>CLRN1</label>
    </interactant>
    <organismsDiffer>false</organismsDiffer>
    <experiments>3</experiments>
</comment>
<comment type="interaction">
    <interactant intactId="EBI-7601760">
        <id>Q53HI1</id>
    </interactant>
    <interactant intactId="EBI-3917045">
        <id>Q6PI48</id>
        <label>DARS2</label>
    </interactant>
    <organismsDiffer>false</organismsDiffer>
    <experiments>3</experiments>
</comment>
<comment type="interaction">
    <interactant intactId="EBI-7601760">
        <id>Q53HI1</id>
    </interactant>
    <interactant intactId="EBI-3915253">
        <id>Q15125</id>
        <label>EBP</label>
    </interactant>
    <organismsDiffer>false</organismsDiffer>
    <experiments>3</experiments>
</comment>
<comment type="interaction">
    <interactant intactId="EBI-7601760">
        <id>Q53HI1</id>
    </interactant>
    <interactant intactId="EBI-18535450">
        <id>Q9GZR5</id>
        <label>ELOVL4</label>
    </interactant>
    <organismsDiffer>false</organismsDiffer>
    <experiments>3</experiments>
</comment>
<comment type="interaction">
    <interactant intactId="EBI-7601760">
        <id>Q53HI1</id>
    </interactant>
    <interactant intactId="EBI-781551">
        <id>Q9Y282</id>
        <label>ERGIC3</label>
    </interactant>
    <organismsDiffer>false</organismsDiffer>
    <experiments>3</experiments>
</comment>
<comment type="interaction">
    <interactant intactId="EBI-7601760">
        <id>Q53HI1</id>
    </interactant>
    <interactant intactId="EBI-18304435">
        <id>Q5JX71</id>
        <label>FAM209A</label>
    </interactant>
    <organismsDiffer>false</organismsDiffer>
    <experiments>3</experiments>
</comment>
<comment type="interaction">
    <interactant intactId="EBI-7601760">
        <id>Q53HI1</id>
    </interactant>
    <interactant intactId="EBI-2833872">
        <id>O15552</id>
        <label>FFAR2</label>
    </interactant>
    <organismsDiffer>false</organismsDiffer>
    <experiments>3</experiments>
</comment>
<comment type="interaction">
    <interactant intactId="EBI-7601760">
        <id>Q53HI1</id>
    </interactant>
    <interactant intactId="EBI-11722638">
        <id>Q8N6M3</id>
        <label>FITM2</label>
    </interactant>
    <organismsDiffer>false</organismsDiffer>
    <experiments>3</experiments>
</comment>
<comment type="interaction">
    <interactant intactId="EBI-7601760">
        <id>Q53HI1</id>
    </interactant>
    <interactant intactId="EBI-13345167">
        <id>Q8TDT2</id>
        <label>GPR152</label>
    </interactant>
    <organismsDiffer>false</organismsDiffer>
    <experiments>3</experiments>
</comment>
<comment type="interaction">
    <interactant intactId="EBI-7601760">
        <id>Q53HI1</id>
    </interactant>
    <interactant intactId="EBI-11721746">
        <id>Q8TED1</id>
        <label>GPX8</label>
    </interactant>
    <organismsDiffer>false</organismsDiffer>
    <experiments>3</experiments>
</comment>
<comment type="interaction">
    <interactant intactId="EBI-7601760">
        <id>Q53HI1</id>
    </interactant>
    <interactant intactId="EBI-1052304">
        <id>Q8NBQ5</id>
        <label>HSD17B11</label>
    </interactant>
    <organismsDiffer>false</organismsDiffer>
    <experiments>3</experiments>
</comment>
<comment type="interaction">
    <interactant intactId="EBI-7601760">
        <id>Q53HI1</id>
    </interactant>
    <interactant intactId="EBI-18053395">
        <id>Q7Z5P4</id>
        <label>HSD17B13</label>
    </interactant>
    <organismsDiffer>false</organismsDiffer>
    <experiments>3</experiments>
</comment>
<comment type="interaction">
    <interactant intactId="EBI-7601760">
        <id>Q53HI1</id>
    </interactant>
    <interactant intactId="EBI-3905457">
        <id>P38484</id>
        <label>IFNGR2</label>
    </interactant>
    <organismsDiffer>false</organismsDiffer>
    <experiments>3</experiments>
</comment>
<comment type="interaction">
    <interactant intactId="EBI-7601760">
        <id>Q53HI1</id>
    </interactant>
    <interactant intactId="EBI-12017638">
        <id>P48051</id>
        <label>KCNJ6</label>
    </interactant>
    <organismsDiffer>false</organismsDiffer>
    <experiments>3</experiments>
</comment>
<comment type="interaction">
    <interactant intactId="EBI-7601760">
        <id>Q53HI1</id>
    </interactant>
    <interactant intactId="EBI-11956541">
        <id>Q9GZY8-5</id>
        <label>MFF</label>
    </interactant>
    <organismsDiffer>false</organismsDiffer>
    <experiments>3</experiments>
</comment>
<comment type="interaction">
    <interactant intactId="EBI-7601760">
        <id>Q53HI1</id>
    </interactant>
    <interactant intactId="EBI-373355">
        <id>Q5SR56</id>
        <label>MFSD14B</label>
    </interactant>
    <organismsDiffer>false</organismsDiffer>
    <experiments>3</experiments>
</comment>
<comment type="interaction">
    <interactant intactId="EBI-7601760">
        <id>Q53HI1</id>
    </interactant>
    <interactant intactId="EBI-724754">
        <id>O14880</id>
        <label>MGST3</label>
    </interactant>
    <organismsDiffer>false</organismsDiffer>
    <experiments>3</experiments>
</comment>
<comment type="interaction">
    <interactant intactId="EBI-7601760">
        <id>Q53HI1</id>
    </interactant>
    <interactant intactId="EBI-3923617">
        <id>Q9H2K0</id>
        <label>MTIF3</label>
    </interactant>
    <organismsDiffer>false</organismsDiffer>
    <experiments>3</experiments>
</comment>
<comment type="interaction">
    <interactant intactId="EBI-7601760">
        <id>Q53HI1</id>
    </interactant>
    <interactant intactId="EBI-17263240">
        <id>P15941-11</id>
        <label>MUC1</label>
    </interactant>
    <organismsDiffer>false</organismsDiffer>
    <experiments>3</experiments>
</comment>
<comment type="interaction">
    <interactant intactId="EBI-7601760">
        <id>Q53HI1</id>
    </interactant>
    <interactant intactId="EBI-7545592">
        <id>Q9H6H4</id>
        <label>REEP4</label>
    </interactant>
    <organismsDiffer>false</organismsDiffer>
    <experiments>3</experiments>
</comment>
<comment type="interaction">
    <interactant intactId="EBI-7601760">
        <id>Q53HI1</id>
    </interactant>
    <interactant intactId="EBI-3920694">
        <id>Q9NR31</id>
        <label>SAR1A</label>
    </interactant>
    <organismsDiffer>false</organismsDiffer>
    <experiments>3</experiments>
</comment>
<comment type="interaction">
    <interactant intactId="EBI-7601760">
        <id>Q53HI1</id>
    </interactant>
    <interactant intactId="EBI-1046170">
        <id>O95470</id>
        <label>SGPL1</label>
    </interactant>
    <organismsDiffer>false</organismsDiffer>
    <experiments>3</experiments>
</comment>
<comment type="interaction">
    <interactant intactId="EBI-7601760">
        <id>Q53HI1</id>
    </interactant>
    <interactant intactId="EBI-3923031">
        <id>Q14973</id>
        <label>SLC10A1</label>
    </interactant>
    <organismsDiffer>false</organismsDiffer>
    <experiments>3</experiments>
</comment>
<comment type="interaction">
    <interactant intactId="EBI-7601760">
        <id>Q53HI1</id>
    </interactant>
    <interactant intactId="EBI-18159983">
        <id>Q3KNW5</id>
        <label>SLC10A6</label>
    </interactant>
    <organismsDiffer>false</organismsDiffer>
    <experiments>3</experiments>
</comment>
<comment type="interaction">
    <interactant intactId="EBI-7601760">
        <id>Q53HI1</id>
    </interactant>
    <interactant intactId="EBI-11603430">
        <id>Q6PL24</id>
        <label>TMED8</label>
    </interactant>
    <organismsDiffer>false</organismsDiffer>
    <experiments>3</experiments>
</comment>
<comment type="interaction">
    <interactant intactId="EBI-7601760">
        <id>Q53HI1</id>
    </interactant>
    <interactant intactId="EBI-8638294">
        <id>Q9NUH8</id>
        <label>TMEM14B</label>
    </interactant>
    <organismsDiffer>false</organismsDiffer>
    <experiments>3</experiments>
</comment>
<comment type="interaction">
    <interactant intactId="EBI-7601760">
        <id>Q53HI1</id>
    </interactant>
    <interactant intactId="EBI-17684533">
        <id>Q9NRX6</id>
        <label>TMEM167B</label>
    </interactant>
    <organismsDiffer>false</organismsDiffer>
    <experiments>3</experiments>
</comment>
<comment type="interaction">
    <interactant intactId="EBI-7601760">
        <id>Q53HI1</id>
    </interactant>
    <interactant intactId="EBI-8642211">
        <id>Q8WY98</id>
        <label>TMEM234</label>
    </interactant>
    <organismsDiffer>false</organismsDiffer>
    <experiments>3</experiments>
</comment>
<comment type="subcellular location">
    <subcellularLocation>
        <location evidence="1">Nucleus inner membrane</location>
        <topology evidence="1">Multi-pass membrane protein</topology>
    </subcellularLocation>
    <subcellularLocation>
        <location evidence="3">Golgi apparatus membrane</location>
        <topology evidence="3">Multi-pass membrane protein</topology>
    </subcellularLocation>
</comment>
<comment type="tissue specificity">
    <text evidence="4">Present in periodontal ligament fibroblasts (at protein level).</text>
</comment>
<comment type="similarity">
    <text evidence="6">Belongs to the unc-50 family.</text>
</comment>
<dbReference type="EMBL" id="AY017215">
    <property type="protein sequence ID" value="AAK08987.1"/>
    <property type="molecule type" value="mRNA"/>
</dbReference>
<dbReference type="EMBL" id="AF077038">
    <property type="protein sequence ID" value="AAD27771.1"/>
    <property type="molecule type" value="mRNA"/>
</dbReference>
<dbReference type="EMBL" id="AL080115">
    <property type="protein sequence ID" value="CAB45714.1"/>
    <property type="molecule type" value="mRNA"/>
</dbReference>
<dbReference type="EMBL" id="AY251534">
    <property type="protein sequence ID" value="AAP20057.1"/>
    <property type="molecule type" value="mRNA"/>
</dbReference>
<dbReference type="EMBL" id="CR533464">
    <property type="protein sequence ID" value="CAG38495.1"/>
    <property type="molecule type" value="mRNA"/>
</dbReference>
<dbReference type="EMBL" id="AK222599">
    <property type="protein sequence ID" value="BAD96319.1"/>
    <property type="molecule type" value="mRNA"/>
</dbReference>
<dbReference type="EMBL" id="AC010134">
    <property type="protein sequence ID" value="AAX93232.1"/>
    <property type="molecule type" value="Genomic_DNA"/>
</dbReference>
<dbReference type="EMBL" id="AC064860">
    <property type="protein sequence ID" value="AAY14975.1"/>
    <property type="molecule type" value="Genomic_DNA"/>
</dbReference>
<dbReference type="EMBL" id="CH471127">
    <property type="protein sequence ID" value="EAX01900.1"/>
    <property type="molecule type" value="Genomic_DNA"/>
</dbReference>
<dbReference type="EMBL" id="CH471127">
    <property type="protein sequence ID" value="EAX01901.1"/>
    <property type="molecule type" value="Genomic_DNA"/>
</dbReference>
<dbReference type="EMBL" id="CH471127">
    <property type="protein sequence ID" value="EAX01902.1"/>
    <property type="molecule type" value="Genomic_DNA"/>
</dbReference>
<dbReference type="EMBL" id="BC017019">
    <property type="protein sequence ID" value="AAH17019.1"/>
    <property type="molecule type" value="mRNA"/>
</dbReference>
<dbReference type="EMBL" id="BC025992">
    <property type="protein sequence ID" value="AAH25992.1"/>
    <property type="molecule type" value="mRNA"/>
</dbReference>
<dbReference type="EMBL" id="BC039078">
    <property type="protein sequence ID" value="AAH39078.1"/>
    <property type="molecule type" value="mRNA"/>
</dbReference>
<dbReference type="EMBL" id="BC091481">
    <property type="protein sequence ID" value="AAH91481.1"/>
    <property type="molecule type" value="mRNA"/>
</dbReference>
<dbReference type="CCDS" id="CCDS2035.1"/>
<dbReference type="PIR" id="T12451">
    <property type="entry name" value="T12451"/>
</dbReference>
<dbReference type="RefSeq" id="NP_054763.2">
    <property type="nucleotide sequence ID" value="NM_014044.6"/>
</dbReference>
<dbReference type="BioGRID" id="117456">
    <property type="interactions" value="49"/>
</dbReference>
<dbReference type="FunCoup" id="Q53HI1">
    <property type="interactions" value="1825"/>
</dbReference>
<dbReference type="IntAct" id="Q53HI1">
    <property type="interactions" value="43"/>
</dbReference>
<dbReference type="MINT" id="Q53HI1"/>
<dbReference type="STRING" id="9606.ENSP00000387146"/>
<dbReference type="iPTMnet" id="Q53HI1"/>
<dbReference type="PhosphoSitePlus" id="Q53HI1"/>
<dbReference type="SwissPalm" id="Q53HI1"/>
<dbReference type="BioMuta" id="UNC50"/>
<dbReference type="DMDM" id="160358938"/>
<dbReference type="jPOST" id="Q53HI1"/>
<dbReference type="MassIVE" id="Q53HI1"/>
<dbReference type="PaxDb" id="9606-ENSP00000350409"/>
<dbReference type="PeptideAtlas" id="Q53HI1"/>
<dbReference type="ProteomicsDB" id="62506"/>
<dbReference type="Pumba" id="Q53HI1"/>
<dbReference type="Antibodypedia" id="17600">
    <property type="antibodies" value="63 antibodies from 22 providers"/>
</dbReference>
<dbReference type="DNASU" id="25972"/>
<dbReference type="Ensembl" id="ENST00000357765.7">
    <property type="protein sequence ID" value="ENSP00000350409.2"/>
    <property type="gene ID" value="ENSG00000115446.12"/>
</dbReference>
<dbReference type="GeneID" id="25972"/>
<dbReference type="KEGG" id="hsa:25972"/>
<dbReference type="MANE-Select" id="ENST00000357765.7">
    <property type="protein sequence ID" value="ENSP00000350409.2"/>
    <property type="RefSeq nucleotide sequence ID" value="NM_014044.7"/>
    <property type="RefSeq protein sequence ID" value="NP_054763.2"/>
</dbReference>
<dbReference type="UCSC" id="uc002szc.5">
    <property type="organism name" value="human"/>
</dbReference>
<dbReference type="AGR" id="HGNC:16046"/>
<dbReference type="CTD" id="25972"/>
<dbReference type="DisGeNET" id="25972"/>
<dbReference type="GeneCards" id="UNC50"/>
<dbReference type="HGNC" id="HGNC:16046">
    <property type="gene designation" value="UNC50"/>
</dbReference>
<dbReference type="HPA" id="ENSG00000115446">
    <property type="expression patterns" value="Low tissue specificity"/>
</dbReference>
<dbReference type="MIM" id="617826">
    <property type="type" value="gene"/>
</dbReference>
<dbReference type="neXtProt" id="NX_Q53HI1"/>
<dbReference type="OpenTargets" id="ENSG00000115446"/>
<dbReference type="PharmGKB" id="PA134984566"/>
<dbReference type="VEuPathDB" id="HostDB:ENSG00000115446"/>
<dbReference type="eggNOG" id="KOG3012">
    <property type="taxonomic scope" value="Eukaryota"/>
</dbReference>
<dbReference type="GeneTree" id="ENSGT00390000018553"/>
<dbReference type="HOGENOM" id="CLU_066239_0_0_1"/>
<dbReference type="InParanoid" id="Q53HI1"/>
<dbReference type="OMA" id="YRNFMYR"/>
<dbReference type="OrthoDB" id="10027013at2759"/>
<dbReference type="PAN-GO" id="Q53HI1">
    <property type="GO annotations" value="1 GO annotation based on evolutionary models"/>
</dbReference>
<dbReference type="PhylomeDB" id="Q53HI1"/>
<dbReference type="TreeFam" id="TF105624"/>
<dbReference type="PathwayCommons" id="Q53HI1"/>
<dbReference type="SignaLink" id="Q53HI1"/>
<dbReference type="BioGRID-ORCS" id="25972">
    <property type="hits" value="334 hits in 1163 CRISPR screens"/>
</dbReference>
<dbReference type="ChiTaRS" id="UNC50">
    <property type="organism name" value="human"/>
</dbReference>
<dbReference type="GenomeRNAi" id="25972"/>
<dbReference type="Pharos" id="Q53HI1">
    <property type="development level" value="Tbio"/>
</dbReference>
<dbReference type="PRO" id="PR:Q53HI1"/>
<dbReference type="Proteomes" id="UP000005640">
    <property type="component" value="Chromosome 2"/>
</dbReference>
<dbReference type="RNAct" id="Q53HI1">
    <property type="molecule type" value="protein"/>
</dbReference>
<dbReference type="Bgee" id="ENSG00000115446">
    <property type="expression patterns" value="Expressed in palpebral conjunctiva and 204 other cell types or tissues"/>
</dbReference>
<dbReference type="ExpressionAtlas" id="Q53HI1">
    <property type="expression patterns" value="baseline and differential"/>
</dbReference>
<dbReference type="GO" id="GO:0000139">
    <property type="term" value="C:Golgi membrane"/>
    <property type="evidence" value="ECO:0000318"/>
    <property type="project" value="GO_Central"/>
</dbReference>
<dbReference type="GO" id="GO:0005637">
    <property type="term" value="C:nuclear inner membrane"/>
    <property type="evidence" value="ECO:0000250"/>
    <property type="project" value="UniProtKB"/>
</dbReference>
<dbReference type="GO" id="GO:0003723">
    <property type="term" value="F:RNA binding"/>
    <property type="evidence" value="ECO:0000250"/>
    <property type="project" value="UniProtKB"/>
</dbReference>
<dbReference type="GO" id="GO:0034394">
    <property type="term" value="P:protein localization to cell surface"/>
    <property type="evidence" value="ECO:0000250"/>
    <property type="project" value="UniProtKB"/>
</dbReference>
<dbReference type="InterPro" id="IPR007881">
    <property type="entry name" value="UNC-50"/>
</dbReference>
<dbReference type="PANTHER" id="PTHR12841">
    <property type="entry name" value="PROTEIN UNC-50 HOMOLOG"/>
    <property type="match status" value="1"/>
</dbReference>
<dbReference type="PANTHER" id="PTHR12841:SF6">
    <property type="entry name" value="PROTEIN UNC-50 HOMOLOG"/>
    <property type="match status" value="1"/>
</dbReference>
<dbReference type="Pfam" id="PF05216">
    <property type="entry name" value="UNC-50"/>
    <property type="match status" value="1"/>
</dbReference>